<dbReference type="EC" id="2.4.2.10" evidence="1"/>
<dbReference type="EMBL" id="CP000094">
    <property type="protein sequence ID" value="ABA77281.1"/>
    <property type="molecule type" value="Genomic_DNA"/>
</dbReference>
<dbReference type="RefSeq" id="WP_011336558.1">
    <property type="nucleotide sequence ID" value="NC_007492.2"/>
</dbReference>
<dbReference type="SMR" id="Q3K4M3"/>
<dbReference type="KEGG" id="pfo:Pfl01_5544"/>
<dbReference type="eggNOG" id="COG0461">
    <property type="taxonomic scope" value="Bacteria"/>
</dbReference>
<dbReference type="HOGENOM" id="CLU_074878_0_1_6"/>
<dbReference type="UniPathway" id="UPA00070">
    <property type="reaction ID" value="UER00119"/>
</dbReference>
<dbReference type="Proteomes" id="UP000002704">
    <property type="component" value="Chromosome"/>
</dbReference>
<dbReference type="GO" id="GO:0005737">
    <property type="term" value="C:cytoplasm"/>
    <property type="evidence" value="ECO:0007669"/>
    <property type="project" value="TreeGrafter"/>
</dbReference>
<dbReference type="GO" id="GO:0000287">
    <property type="term" value="F:magnesium ion binding"/>
    <property type="evidence" value="ECO:0007669"/>
    <property type="project" value="UniProtKB-UniRule"/>
</dbReference>
<dbReference type="GO" id="GO:0004588">
    <property type="term" value="F:orotate phosphoribosyltransferase activity"/>
    <property type="evidence" value="ECO:0007669"/>
    <property type="project" value="UniProtKB-UniRule"/>
</dbReference>
<dbReference type="GO" id="GO:0006207">
    <property type="term" value="P:'de novo' pyrimidine nucleobase biosynthetic process"/>
    <property type="evidence" value="ECO:0007669"/>
    <property type="project" value="TreeGrafter"/>
</dbReference>
<dbReference type="GO" id="GO:0044205">
    <property type="term" value="P:'de novo' UMP biosynthetic process"/>
    <property type="evidence" value="ECO:0007669"/>
    <property type="project" value="UniProtKB-UniRule"/>
</dbReference>
<dbReference type="GO" id="GO:0046132">
    <property type="term" value="P:pyrimidine ribonucleoside biosynthetic process"/>
    <property type="evidence" value="ECO:0007669"/>
    <property type="project" value="TreeGrafter"/>
</dbReference>
<dbReference type="CDD" id="cd06223">
    <property type="entry name" value="PRTases_typeI"/>
    <property type="match status" value="1"/>
</dbReference>
<dbReference type="FunFam" id="3.40.50.2020:FF:000008">
    <property type="entry name" value="Orotate phosphoribosyltransferase"/>
    <property type="match status" value="1"/>
</dbReference>
<dbReference type="Gene3D" id="3.40.50.2020">
    <property type="match status" value="1"/>
</dbReference>
<dbReference type="HAMAP" id="MF_01208">
    <property type="entry name" value="PyrE"/>
    <property type="match status" value="1"/>
</dbReference>
<dbReference type="InterPro" id="IPR023031">
    <property type="entry name" value="OPRT"/>
</dbReference>
<dbReference type="InterPro" id="IPR004467">
    <property type="entry name" value="Or_phspho_trans_dom"/>
</dbReference>
<dbReference type="InterPro" id="IPR000836">
    <property type="entry name" value="PRibTrfase_dom"/>
</dbReference>
<dbReference type="InterPro" id="IPR029057">
    <property type="entry name" value="PRTase-like"/>
</dbReference>
<dbReference type="NCBIfam" id="TIGR00336">
    <property type="entry name" value="pyrE"/>
    <property type="match status" value="1"/>
</dbReference>
<dbReference type="PANTHER" id="PTHR46683">
    <property type="entry name" value="OROTATE PHOSPHORIBOSYLTRANSFERASE 1-RELATED"/>
    <property type="match status" value="1"/>
</dbReference>
<dbReference type="PANTHER" id="PTHR46683:SF1">
    <property type="entry name" value="OROTATE PHOSPHORIBOSYLTRANSFERASE 1-RELATED"/>
    <property type="match status" value="1"/>
</dbReference>
<dbReference type="Pfam" id="PF00156">
    <property type="entry name" value="Pribosyltran"/>
    <property type="match status" value="1"/>
</dbReference>
<dbReference type="SUPFAM" id="SSF53271">
    <property type="entry name" value="PRTase-like"/>
    <property type="match status" value="1"/>
</dbReference>
<dbReference type="PROSITE" id="PS00103">
    <property type="entry name" value="PUR_PYR_PR_TRANSFER"/>
    <property type="match status" value="1"/>
</dbReference>
<reference key="1">
    <citation type="journal article" date="2009" name="Genome Biol.">
        <title>Genomic and genetic analyses of diversity and plant interactions of Pseudomonas fluorescens.</title>
        <authorList>
            <person name="Silby M.W."/>
            <person name="Cerdeno-Tarraga A.M."/>
            <person name="Vernikos G.S."/>
            <person name="Giddens S.R."/>
            <person name="Jackson R.W."/>
            <person name="Preston G.M."/>
            <person name="Zhang X.-X."/>
            <person name="Moon C.D."/>
            <person name="Gehrig S.M."/>
            <person name="Godfrey S.A.C."/>
            <person name="Knight C.G."/>
            <person name="Malone J.G."/>
            <person name="Robinson Z."/>
            <person name="Spiers A.J."/>
            <person name="Harris S."/>
            <person name="Challis G.L."/>
            <person name="Yaxley A.M."/>
            <person name="Harris D."/>
            <person name="Seeger K."/>
            <person name="Murphy L."/>
            <person name="Rutter S."/>
            <person name="Squares R."/>
            <person name="Quail M.A."/>
            <person name="Saunders E."/>
            <person name="Mavromatis K."/>
            <person name="Brettin T.S."/>
            <person name="Bentley S.D."/>
            <person name="Hothersall J."/>
            <person name="Stephens E."/>
            <person name="Thomas C.M."/>
            <person name="Parkhill J."/>
            <person name="Levy S.B."/>
            <person name="Rainey P.B."/>
            <person name="Thomson N.R."/>
        </authorList>
    </citation>
    <scope>NUCLEOTIDE SEQUENCE [LARGE SCALE GENOMIC DNA]</scope>
    <source>
        <strain>Pf0-1</strain>
    </source>
</reference>
<comment type="function">
    <text evidence="1">Catalyzes the transfer of a ribosyl phosphate group from 5-phosphoribose 1-diphosphate to orotate, leading to the formation of orotidine monophosphate (OMP).</text>
</comment>
<comment type="catalytic activity">
    <reaction evidence="1">
        <text>orotidine 5'-phosphate + diphosphate = orotate + 5-phospho-alpha-D-ribose 1-diphosphate</text>
        <dbReference type="Rhea" id="RHEA:10380"/>
        <dbReference type="ChEBI" id="CHEBI:30839"/>
        <dbReference type="ChEBI" id="CHEBI:33019"/>
        <dbReference type="ChEBI" id="CHEBI:57538"/>
        <dbReference type="ChEBI" id="CHEBI:58017"/>
        <dbReference type="EC" id="2.4.2.10"/>
    </reaction>
</comment>
<comment type="cofactor">
    <cofactor evidence="1">
        <name>Mg(2+)</name>
        <dbReference type="ChEBI" id="CHEBI:18420"/>
    </cofactor>
</comment>
<comment type="pathway">
    <text evidence="1">Pyrimidine metabolism; UMP biosynthesis via de novo pathway; UMP from orotate: step 1/2.</text>
</comment>
<comment type="subunit">
    <text evidence="1">Homodimer.</text>
</comment>
<comment type="similarity">
    <text evidence="1">Belongs to the purine/pyrimidine phosphoribosyltransferase family. PyrE subfamily.</text>
</comment>
<name>PYRE_PSEPF</name>
<organism>
    <name type="scientific">Pseudomonas fluorescens (strain Pf0-1)</name>
    <dbReference type="NCBI Taxonomy" id="205922"/>
    <lineage>
        <taxon>Bacteria</taxon>
        <taxon>Pseudomonadati</taxon>
        <taxon>Pseudomonadota</taxon>
        <taxon>Gammaproteobacteria</taxon>
        <taxon>Pseudomonadales</taxon>
        <taxon>Pseudomonadaceae</taxon>
        <taxon>Pseudomonas</taxon>
    </lineage>
</organism>
<gene>
    <name evidence="1" type="primary">pyrE</name>
    <name type="ordered locus">Pfl01_5544</name>
</gene>
<evidence type="ECO:0000255" key="1">
    <source>
        <dbReference type="HAMAP-Rule" id="MF_01208"/>
    </source>
</evidence>
<sequence>MQAYQRDFIRFAIDRGVLRFGEFTLKSGRTSPYFFNAGLFNSGSALAQLGRFYAAAIAESGIPFDVLFGPAYKGIPLAATTAVALAEHHNRDLPWCFNRKEAKAHGEGGSLVGAPLTGDVLIIDDVITAGTAIREVMQIIASQDGAKAAGVLIALNRQERGNGELSAIQEVERDFGIPVISIVSLNQVLEFLADDPQLKQHLPAVEAYRAQFGV</sequence>
<feature type="chain" id="PRO_1000066277" description="Orotate phosphoribosyltransferase">
    <location>
        <begin position="1"/>
        <end position="214"/>
    </location>
</feature>
<feature type="binding site" description="in other chain" evidence="1">
    <location>
        <position position="26"/>
    </location>
    <ligand>
        <name>5-phospho-alpha-D-ribose 1-diphosphate</name>
        <dbReference type="ChEBI" id="CHEBI:58017"/>
        <note>ligand shared between dimeric partners</note>
    </ligand>
</feature>
<feature type="binding site" evidence="1">
    <location>
        <begin position="34"/>
        <end position="35"/>
    </location>
    <ligand>
        <name>orotate</name>
        <dbReference type="ChEBI" id="CHEBI:30839"/>
    </ligand>
</feature>
<feature type="binding site" description="in other chain" evidence="1">
    <location>
        <begin position="72"/>
        <end position="73"/>
    </location>
    <ligand>
        <name>5-phospho-alpha-D-ribose 1-diphosphate</name>
        <dbReference type="ChEBI" id="CHEBI:58017"/>
        <note>ligand shared between dimeric partners</note>
    </ligand>
</feature>
<feature type="binding site" evidence="1">
    <location>
        <position position="99"/>
    </location>
    <ligand>
        <name>5-phospho-alpha-D-ribose 1-diphosphate</name>
        <dbReference type="ChEBI" id="CHEBI:58017"/>
        <note>ligand shared between dimeric partners</note>
    </ligand>
</feature>
<feature type="binding site" description="in other chain" evidence="1">
    <location>
        <position position="100"/>
    </location>
    <ligand>
        <name>5-phospho-alpha-D-ribose 1-diphosphate</name>
        <dbReference type="ChEBI" id="CHEBI:58017"/>
        <note>ligand shared between dimeric partners</note>
    </ligand>
</feature>
<feature type="binding site" evidence="1">
    <location>
        <position position="103"/>
    </location>
    <ligand>
        <name>5-phospho-alpha-D-ribose 1-diphosphate</name>
        <dbReference type="ChEBI" id="CHEBI:58017"/>
        <note>ligand shared between dimeric partners</note>
    </ligand>
</feature>
<feature type="binding site" evidence="1">
    <location>
        <position position="105"/>
    </location>
    <ligand>
        <name>5-phospho-alpha-D-ribose 1-diphosphate</name>
        <dbReference type="ChEBI" id="CHEBI:58017"/>
        <note>ligand shared between dimeric partners</note>
    </ligand>
</feature>
<feature type="binding site" description="in other chain" evidence="1">
    <location>
        <begin position="124"/>
        <end position="132"/>
    </location>
    <ligand>
        <name>5-phospho-alpha-D-ribose 1-diphosphate</name>
        <dbReference type="ChEBI" id="CHEBI:58017"/>
        <note>ligand shared between dimeric partners</note>
    </ligand>
</feature>
<feature type="binding site" evidence="1">
    <location>
        <position position="128"/>
    </location>
    <ligand>
        <name>orotate</name>
        <dbReference type="ChEBI" id="CHEBI:30839"/>
    </ligand>
</feature>
<feature type="binding site" evidence="1">
    <location>
        <position position="157"/>
    </location>
    <ligand>
        <name>orotate</name>
        <dbReference type="ChEBI" id="CHEBI:30839"/>
    </ligand>
</feature>
<keyword id="KW-0328">Glycosyltransferase</keyword>
<keyword id="KW-0460">Magnesium</keyword>
<keyword id="KW-0665">Pyrimidine biosynthesis</keyword>
<keyword id="KW-0808">Transferase</keyword>
<accession>Q3K4M3</accession>
<protein>
    <recommendedName>
        <fullName evidence="1">Orotate phosphoribosyltransferase</fullName>
        <shortName evidence="1">OPRT</shortName>
        <shortName evidence="1">OPRTase</shortName>
        <ecNumber evidence="1">2.4.2.10</ecNumber>
    </recommendedName>
</protein>
<proteinExistence type="inferred from homology"/>